<sequence length="637" mass="71614">MSEKNEIYDESQIQVLEGLEAVRKRPGMYIGSTGTRGLHHLVYEIVDNSIDEALAGYCSHIKVFIHKDNSVTVSDDGRGMPIGIHHKMKKPTVEVIMTILHAGGKFGGGAYRVSGGLHGVGASVVNALSETCEVEVKTEGHIWKQTYHRGKVASPFEKIGDSDEHGTKIYFKPDPEIFEDTEYDYDTLSQRLRELAFLNKGIKIELTDERHDKNEIFHYEGGLKSFVSYLNRNKEVVFKEPIYVEGSIDSNYSVEIALQYNDGYNENIFSFANNIHTIEGGTHLAGFKTALTRVINDYAKKFGYLKENDKNLSGEDIREGLTAVVSVKLTEPQFEGQTKTKLGNTEVRGIVDSIISERVSTYLEENPQIGKLVIDKALVASRAREAAKKAREITRRKSVLESTSLPGKLADCSSKDAEECEIYIVEGDSAGGSAKQGRNRRFQAILPLRGKIMNVEKQRIDKILNSEEIKAMATAFGGGIGKDFDVSKLRYHKIIIMTDADVDGAHIRTLILTFFYRYMTELISEGHVFIAQPPLYKVTKTRKEYYAYSDKELEDVLQDVGGKDKNTDIQRYKGLGEMNPEQLWETTMNPEQRTLIKVNIEDAMAADEIFTILMGDKVDPRRKFIEENATKVVNLDV</sequence>
<organism>
    <name type="scientific">Clostridium acetobutylicum (strain ATCC 824 / DSM 792 / JCM 1419 / IAM 19013 / LMG 5710 / NBRC 13948 / NRRL B-527 / VKM B-1787 / 2291 / W)</name>
    <dbReference type="NCBI Taxonomy" id="272562"/>
    <lineage>
        <taxon>Bacteria</taxon>
        <taxon>Bacillati</taxon>
        <taxon>Bacillota</taxon>
        <taxon>Clostridia</taxon>
        <taxon>Eubacteriales</taxon>
        <taxon>Clostridiaceae</taxon>
        <taxon>Clostridium</taxon>
    </lineage>
</organism>
<reference key="1">
    <citation type="journal article" date="1996" name="Anaerobe">
        <title>Nucleotide sequence and molecular characterization of the DNA gyrase genes from Clostridium acetobutylicum.</title>
        <authorList>
            <person name="Ullmann S."/>
            <person name="Duerre P."/>
        </authorList>
    </citation>
    <scope>NUCLEOTIDE SEQUENCE [GENOMIC DNA]</scope>
    <source>
        <strain>ATCC 824 / DSM 792 / JCM 1419 / IAM 19013 / LMG 5710 / NBRC 13948 / NRRL B-527 / VKM B-1787 / 2291 / W</strain>
    </source>
</reference>
<reference key="2">
    <citation type="journal article" date="2001" name="J. Bacteriol.">
        <title>Genome sequence and comparative analysis of the solvent-producing bacterium Clostridium acetobutylicum.</title>
        <authorList>
            <person name="Noelling J."/>
            <person name="Breton G."/>
            <person name="Omelchenko M.V."/>
            <person name="Makarova K.S."/>
            <person name="Zeng Q."/>
            <person name="Gibson R."/>
            <person name="Lee H.M."/>
            <person name="Dubois J."/>
            <person name="Qiu D."/>
            <person name="Hitti J."/>
            <person name="Wolf Y.I."/>
            <person name="Tatusov R.L."/>
            <person name="Sabathe F."/>
            <person name="Doucette-Stamm L.A."/>
            <person name="Soucaille P."/>
            <person name="Daly M.J."/>
            <person name="Bennett G.N."/>
            <person name="Koonin E.V."/>
            <person name="Smith D.R."/>
        </authorList>
    </citation>
    <scope>NUCLEOTIDE SEQUENCE [LARGE SCALE GENOMIC DNA]</scope>
    <source>
        <strain>ATCC 824 / DSM 792 / JCM 1419 / IAM 19013 / LMG 5710 / NBRC 13948 / NRRL B-527 / VKM B-1787 / 2291 / W</strain>
    </source>
</reference>
<keyword id="KW-0067">ATP-binding</keyword>
<keyword id="KW-0963">Cytoplasm</keyword>
<keyword id="KW-0238">DNA-binding</keyword>
<keyword id="KW-0413">Isomerase</keyword>
<keyword id="KW-0460">Magnesium</keyword>
<keyword id="KW-0479">Metal-binding</keyword>
<keyword id="KW-0547">Nucleotide-binding</keyword>
<keyword id="KW-1185">Reference proteome</keyword>
<keyword id="KW-0799">Topoisomerase</keyword>
<dbReference type="EC" id="5.6.2.2" evidence="1"/>
<dbReference type="EMBL" id="U35453">
    <property type="protein sequence ID" value="AAB41130.1"/>
    <property type="molecule type" value="Genomic_DNA"/>
</dbReference>
<dbReference type="EMBL" id="AE001437">
    <property type="protein sequence ID" value="AAK77993.1"/>
    <property type="molecule type" value="Genomic_DNA"/>
</dbReference>
<dbReference type="PIR" id="F96900">
    <property type="entry name" value="F96900"/>
</dbReference>
<dbReference type="PIR" id="T46555">
    <property type="entry name" value="T46555"/>
</dbReference>
<dbReference type="RefSeq" id="NP_346653.1">
    <property type="nucleotide sequence ID" value="NC_003030.1"/>
</dbReference>
<dbReference type="RefSeq" id="WP_010963335.1">
    <property type="nucleotide sequence ID" value="NC_003030.1"/>
</dbReference>
<dbReference type="SMR" id="P94604"/>
<dbReference type="STRING" id="272562.CA_C0006"/>
<dbReference type="GeneID" id="44996479"/>
<dbReference type="KEGG" id="cac:CA_C0006"/>
<dbReference type="PATRIC" id="fig|272562.8.peg.185"/>
<dbReference type="eggNOG" id="COG0187">
    <property type="taxonomic scope" value="Bacteria"/>
</dbReference>
<dbReference type="HOGENOM" id="CLU_006146_4_1_9"/>
<dbReference type="OrthoDB" id="9802808at2"/>
<dbReference type="Proteomes" id="UP000000814">
    <property type="component" value="Chromosome"/>
</dbReference>
<dbReference type="GO" id="GO:0005694">
    <property type="term" value="C:chromosome"/>
    <property type="evidence" value="ECO:0007669"/>
    <property type="project" value="InterPro"/>
</dbReference>
<dbReference type="GO" id="GO:0005737">
    <property type="term" value="C:cytoplasm"/>
    <property type="evidence" value="ECO:0007669"/>
    <property type="project" value="UniProtKB-SubCell"/>
</dbReference>
<dbReference type="GO" id="GO:0005524">
    <property type="term" value="F:ATP binding"/>
    <property type="evidence" value="ECO:0007669"/>
    <property type="project" value="UniProtKB-UniRule"/>
</dbReference>
<dbReference type="GO" id="GO:0003677">
    <property type="term" value="F:DNA binding"/>
    <property type="evidence" value="ECO:0007669"/>
    <property type="project" value="UniProtKB-KW"/>
</dbReference>
<dbReference type="GO" id="GO:0034335">
    <property type="term" value="F:DNA negative supercoiling activity"/>
    <property type="evidence" value="ECO:0007669"/>
    <property type="project" value="UniProtKB-ARBA"/>
</dbReference>
<dbReference type="GO" id="GO:0046872">
    <property type="term" value="F:metal ion binding"/>
    <property type="evidence" value="ECO:0007669"/>
    <property type="project" value="UniProtKB-KW"/>
</dbReference>
<dbReference type="GO" id="GO:0006265">
    <property type="term" value="P:DNA topological change"/>
    <property type="evidence" value="ECO:0007669"/>
    <property type="project" value="UniProtKB-UniRule"/>
</dbReference>
<dbReference type="GO" id="GO:0006261">
    <property type="term" value="P:DNA-templated DNA replication"/>
    <property type="evidence" value="ECO:0007669"/>
    <property type="project" value="UniProtKB-UniRule"/>
</dbReference>
<dbReference type="CDD" id="cd16928">
    <property type="entry name" value="HATPase_GyrB-like"/>
    <property type="match status" value="1"/>
</dbReference>
<dbReference type="CDD" id="cd00822">
    <property type="entry name" value="TopoII_Trans_DNA_gyrase"/>
    <property type="match status" value="1"/>
</dbReference>
<dbReference type="CDD" id="cd03366">
    <property type="entry name" value="TOPRIM_TopoIIA_GyrB"/>
    <property type="match status" value="1"/>
</dbReference>
<dbReference type="FunFam" id="3.30.230.10:FF:000005">
    <property type="entry name" value="DNA gyrase subunit B"/>
    <property type="match status" value="1"/>
</dbReference>
<dbReference type="FunFam" id="3.30.565.10:FF:000002">
    <property type="entry name" value="DNA gyrase subunit B"/>
    <property type="match status" value="1"/>
</dbReference>
<dbReference type="FunFam" id="3.40.50.670:FF:000002">
    <property type="entry name" value="DNA gyrase subunit B"/>
    <property type="match status" value="1"/>
</dbReference>
<dbReference type="Gene3D" id="3.30.230.10">
    <property type="match status" value="1"/>
</dbReference>
<dbReference type="Gene3D" id="3.40.50.670">
    <property type="match status" value="1"/>
</dbReference>
<dbReference type="Gene3D" id="3.30.565.10">
    <property type="entry name" value="Histidine kinase-like ATPase, C-terminal domain"/>
    <property type="match status" value="1"/>
</dbReference>
<dbReference type="HAMAP" id="MF_01898">
    <property type="entry name" value="GyrB"/>
    <property type="match status" value="1"/>
</dbReference>
<dbReference type="InterPro" id="IPR002288">
    <property type="entry name" value="DNA_gyrase_B_C"/>
</dbReference>
<dbReference type="InterPro" id="IPR011557">
    <property type="entry name" value="GyrB"/>
</dbReference>
<dbReference type="InterPro" id="IPR036890">
    <property type="entry name" value="HATPase_C_sf"/>
</dbReference>
<dbReference type="InterPro" id="IPR020568">
    <property type="entry name" value="Ribosomal_Su5_D2-typ_SF"/>
</dbReference>
<dbReference type="InterPro" id="IPR014721">
    <property type="entry name" value="Ribsml_uS5_D2-typ_fold_subgr"/>
</dbReference>
<dbReference type="InterPro" id="IPR001241">
    <property type="entry name" value="Topo_IIA"/>
</dbReference>
<dbReference type="InterPro" id="IPR013760">
    <property type="entry name" value="Topo_IIA-like_dom_sf"/>
</dbReference>
<dbReference type="InterPro" id="IPR000565">
    <property type="entry name" value="Topo_IIA_B"/>
</dbReference>
<dbReference type="InterPro" id="IPR013759">
    <property type="entry name" value="Topo_IIA_B_C"/>
</dbReference>
<dbReference type="InterPro" id="IPR013506">
    <property type="entry name" value="Topo_IIA_bsu_dom2"/>
</dbReference>
<dbReference type="InterPro" id="IPR018522">
    <property type="entry name" value="TopoIIA_CS"/>
</dbReference>
<dbReference type="InterPro" id="IPR006171">
    <property type="entry name" value="TOPRIM_dom"/>
</dbReference>
<dbReference type="InterPro" id="IPR034160">
    <property type="entry name" value="TOPRIM_GyrB"/>
</dbReference>
<dbReference type="NCBIfam" id="TIGR01059">
    <property type="entry name" value="gyrB"/>
    <property type="match status" value="1"/>
</dbReference>
<dbReference type="NCBIfam" id="NF004189">
    <property type="entry name" value="PRK05644.1"/>
    <property type="match status" value="1"/>
</dbReference>
<dbReference type="NCBIfam" id="NF011501">
    <property type="entry name" value="PRK14939.1"/>
    <property type="match status" value="1"/>
</dbReference>
<dbReference type="PANTHER" id="PTHR45866:SF1">
    <property type="entry name" value="DNA GYRASE SUBUNIT B, MITOCHONDRIAL"/>
    <property type="match status" value="1"/>
</dbReference>
<dbReference type="PANTHER" id="PTHR45866">
    <property type="entry name" value="DNA GYRASE/TOPOISOMERASE SUBUNIT B"/>
    <property type="match status" value="1"/>
</dbReference>
<dbReference type="Pfam" id="PF00204">
    <property type="entry name" value="DNA_gyraseB"/>
    <property type="match status" value="1"/>
</dbReference>
<dbReference type="Pfam" id="PF00986">
    <property type="entry name" value="DNA_gyraseB_C"/>
    <property type="match status" value="1"/>
</dbReference>
<dbReference type="Pfam" id="PF02518">
    <property type="entry name" value="HATPase_c"/>
    <property type="match status" value="1"/>
</dbReference>
<dbReference type="Pfam" id="PF01751">
    <property type="entry name" value="Toprim"/>
    <property type="match status" value="1"/>
</dbReference>
<dbReference type="PRINTS" id="PR01159">
    <property type="entry name" value="DNAGYRASEB"/>
</dbReference>
<dbReference type="PRINTS" id="PR00418">
    <property type="entry name" value="TPI2FAMILY"/>
</dbReference>
<dbReference type="SMART" id="SM00387">
    <property type="entry name" value="HATPase_c"/>
    <property type="match status" value="1"/>
</dbReference>
<dbReference type="SMART" id="SM00433">
    <property type="entry name" value="TOP2c"/>
    <property type="match status" value="1"/>
</dbReference>
<dbReference type="SUPFAM" id="SSF55874">
    <property type="entry name" value="ATPase domain of HSP90 chaperone/DNA topoisomerase II/histidine kinase"/>
    <property type="match status" value="1"/>
</dbReference>
<dbReference type="SUPFAM" id="SSF54211">
    <property type="entry name" value="Ribosomal protein S5 domain 2-like"/>
    <property type="match status" value="1"/>
</dbReference>
<dbReference type="SUPFAM" id="SSF56719">
    <property type="entry name" value="Type II DNA topoisomerase"/>
    <property type="match status" value="1"/>
</dbReference>
<dbReference type="PROSITE" id="PS00177">
    <property type="entry name" value="TOPOISOMERASE_II"/>
    <property type="match status" value="1"/>
</dbReference>
<dbReference type="PROSITE" id="PS50880">
    <property type="entry name" value="TOPRIM"/>
    <property type="match status" value="1"/>
</dbReference>
<protein>
    <recommendedName>
        <fullName evidence="1">DNA gyrase subunit B</fullName>
        <ecNumber evidence="1">5.6.2.2</ecNumber>
    </recommendedName>
</protein>
<proteinExistence type="inferred from homology"/>
<name>GYRB_CLOAB</name>
<gene>
    <name evidence="1" type="primary">gyrB</name>
    <name type="ordered locus">CA_C0006</name>
</gene>
<comment type="function">
    <text evidence="1">A type II topoisomerase that negatively supercoils closed circular double-stranded (ds) DNA in an ATP-dependent manner to modulate DNA topology and maintain chromosomes in an underwound state. Negative supercoiling favors strand separation, and DNA replication, transcription, recombination and repair, all of which involve strand separation. Also able to catalyze the interconversion of other topological isomers of dsDNA rings, including catenanes and knotted rings. Type II topoisomerases break and join 2 DNA strands simultaneously in an ATP-dependent manner.</text>
</comment>
<comment type="catalytic activity">
    <reaction evidence="1">
        <text>ATP-dependent breakage, passage and rejoining of double-stranded DNA.</text>
        <dbReference type="EC" id="5.6.2.2"/>
    </reaction>
</comment>
<comment type="cofactor">
    <cofactor evidence="1">
        <name>Mg(2+)</name>
        <dbReference type="ChEBI" id="CHEBI:18420"/>
    </cofactor>
    <cofactor evidence="1">
        <name>Mn(2+)</name>
        <dbReference type="ChEBI" id="CHEBI:29035"/>
    </cofactor>
    <cofactor evidence="1">
        <name>Ca(2+)</name>
        <dbReference type="ChEBI" id="CHEBI:29108"/>
    </cofactor>
    <text evidence="1">Binds two Mg(2+) per subunit. The magnesium ions form salt bridges with both the protein and the DNA. Can also accept other divalent metal cations, such as Mn(2+) or Ca(2+).</text>
</comment>
<comment type="subunit">
    <text evidence="1">Heterotetramer, composed of two GyrA and two GyrB chains. In the heterotetramer, GyrA contains the active site tyrosine that forms a transient covalent intermediate with DNA, while GyrB binds cofactors and catalyzes ATP hydrolysis.</text>
</comment>
<comment type="subcellular location">
    <subcellularLocation>
        <location evidence="1">Cytoplasm</location>
    </subcellularLocation>
</comment>
<comment type="miscellaneous">
    <text evidence="1">Few gyrases are as efficient as E.coli at forming negative supercoils. Not all organisms have 2 type II topoisomerases; in organisms with a single type II topoisomerase this enzyme also has to decatenate newly replicated chromosomes.</text>
</comment>
<comment type="similarity">
    <text evidence="1">Belongs to the type II topoisomerase GyrB family.</text>
</comment>
<accession>P94604</accession>
<evidence type="ECO:0000255" key="1">
    <source>
        <dbReference type="HAMAP-Rule" id="MF_01898"/>
    </source>
</evidence>
<evidence type="ECO:0000305" key="2"/>
<feature type="chain" id="PRO_0000145306" description="DNA gyrase subunit B">
    <location>
        <begin position="1"/>
        <end position="637"/>
    </location>
</feature>
<feature type="domain" description="Toprim" evidence="1">
    <location>
        <begin position="420"/>
        <end position="534"/>
    </location>
</feature>
<feature type="binding site" evidence="1">
    <location>
        <position position="426"/>
    </location>
    <ligand>
        <name>Mg(2+)</name>
        <dbReference type="ChEBI" id="CHEBI:18420"/>
        <label>1</label>
        <note>catalytic</note>
    </ligand>
</feature>
<feature type="binding site" evidence="1">
    <location>
        <position position="499"/>
    </location>
    <ligand>
        <name>Mg(2+)</name>
        <dbReference type="ChEBI" id="CHEBI:18420"/>
        <label>1</label>
        <note>catalytic</note>
    </ligand>
</feature>
<feature type="binding site" evidence="1">
    <location>
        <position position="499"/>
    </location>
    <ligand>
        <name>Mg(2+)</name>
        <dbReference type="ChEBI" id="CHEBI:18420"/>
        <label>2</label>
    </ligand>
</feature>
<feature type="binding site" evidence="1">
    <location>
        <position position="501"/>
    </location>
    <ligand>
        <name>Mg(2+)</name>
        <dbReference type="ChEBI" id="CHEBI:18420"/>
        <label>2</label>
    </ligand>
</feature>
<feature type="site" description="Interaction with DNA" evidence="1">
    <location>
        <position position="451"/>
    </location>
</feature>
<feature type="site" description="Interaction with DNA" evidence="1">
    <location>
        <position position="454"/>
    </location>
</feature>
<feature type="sequence conflict" description="In Ref. 1; AAB41130." evidence="2" ref="1">
    <original>S</original>
    <variation>T</variation>
    <location>
        <position position="32"/>
    </location>
</feature>